<sequence>MQPFGVLDRYIGKTIFTTIMMTLFMLVSLSGIIKFVDQLKKAGQGSYDALGAGMYTLLSVPKDVQIFFPMAALLGALLGLGMLAQRSELVVMQASGFTRMQVALSVMKTAIPLVLLTMAIGEWVAPQGEQMARNYRAQAMYGGSLLSTQQGLWAKDGNNFVYIERVKGDEELGGISIYAFNENRRLQSVRYAATAKFDPEHKVWRLSQVDESDLTNPKQITGSQTVSGTWKTNLTPDKLGVVALDPDALSISGLHNYVKYLKSSGQDAGRYQLNMWSKIFQPLSVAVMMLMALSFIFGPLRSVPMGVRVVTGISFGFVFYVLDQIFGPLTLVYGIPPIIGALLPSASFFLISLWLLMRKS</sequence>
<protein>
    <recommendedName>
        <fullName>Lipopolysaccharide export system permease protein LptG</fullName>
    </recommendedName>
</protein>
<proteinExistence type="evidence at protein level"/>
<reference key="1">
    <citation type="journal article" date="1995" name="Nucleic Acids Res.">
        <title>Analysis of the Escherichia coli genome VI: DNA sequence of the region from 92.8 through 100 minutes.</title>
        <authorList>
            <person name="Burland V.D."/>
            <person name="Plunkett G. III"/>
            <person name="Sofia H.J."/>
            <person name="Daniels D.L."/>
            <person name="Blattner F.R."/>
        </authorList>
    </citation>
    <scope>NUCLEOTIDE SEQUENCE [LARGE SCALE GENOMIC DNA]</scope>
    <source>
        <strain>K12 / MG1655 / ATCC 47076</strain>
    </source>
</reference>
<reference key="2">
    <citation type="journal article" date="1997" name="Science">
        <title>The complete genome sequence of Escherichia coli K-12.</title>
        <authorList>
            <person name="Blattner F.R."/>
            <person name="Plunkett G. III"/>
            <person name="Bloch C.A."/>
            <person name="Perna N.T."/>
            <person name="Burland V."/>
            <person name="Riley M."/>
            <person name="Collado-Vides J."/>
            <person name="Glasner J.D."/>
            <person name="Rode C.K."/>
            <person name="Mayhew G.F."/>
            <person name="Gregor J."/>
            <person name="Davis N.W."/>
            <person name="Kirkpatrick H.A."/>
            <person name="Goeden M.A."/>
            <person name="Rose D.J."/>
            <person name="Mau B."/>
            <person name="Shao Y."/>
        </authorList>
    </citation>
    <scope>NUCLEOTIDE SEQUENCE [LARGE SCALE GENOMIC DNA]</scope>
    <source>
        <strain>K12 / MG1655 / ATCC 47076</strain>
    </source>
</reference>
<reference key="3">
    <citation type="journal article" date="2006" name="Mol. Syst. Biol.">
        <title>Highly accurate genome sequences of Escherichia coli K-12 strains MG1655 and W3110.</title>
        <authorList>
            <person name="Hayashi K."/>
            <person name="Morooka N."/>
            <person name="Yamamoto Y."/>
            <person name="Fujita K."/>
            <person name="Isono K."/>
            <person name="Choi S."/>
            <person name="Ohtsubo E."/>
            <person name="Baba T."/>
            <person name="Wanner B.L."/>
            <person name="Mori H."/>
            <person name="Horiuchi T."/>
        </authorList>
    </citation>
    <scope>NUCLEOTIDE SEQUENCE [LARGE SCALE GENOMIC DNA]</scope>
    <source>
        <strain>K12 / W3110 / ATCC 27325 / DSM 5911</strain>
    </source>
</reference>
<reference key="4">
    <citation type="journal article" date="2005" name="Science">
        <title>Global topology analysis of the Escherichia coli inner membrane proteome.</title>
        <authorList>
            <person name="Daley D.O."/>
            <person name="Rapp M."/>
            <person name="Granseth E."/>
            <person name="Melen K."/>
            <person name="Drew D."/>
            <person name="von Heijne G."/>
        </authorList>
    </citation>
    <scope>TOPOLOGY [LARGE SCALE ANALYSIS]</scope>
    <source>
        <strain>K12 / MG1655 / ATCC 47076</strain>
    </source>
</reference>
<reference key="5">
    <citation type="journal article" date="2008" name="Proc. Natl. Acad. Sci. U.S.A.">
        <title>Identification of two inner-membrane proteins required for the transport of lipopolysaccharide to the outer membrane of Escherichia coli.</title>
        <authorList>
            <person name="Ruiz N."/>
            <person name="Gronenberg L.S."/>
            <person name="Kahne D."/>
            <person name="Silhavy T.J."/>
        </authorList>
    </citation>
    <scope>FUNCTION IN LIPOPOLYSACCHARIDE TRANSPORT</scope>
    <source>
        <strain>K12 / MC4100 / ATCC 35695 / DSM 6574</strain>
    </source>
</reference>
<reference key="6">
    <citation type="journal article" date="2009" name="FEBS Lett.">
        <title>Biochemical characterization of an ABC transporter LptBFGC complex required for the outer membrane sorting of lipopolysaccharides.</title>
        <authorList>
            <person name="Narita S."/>
            <person name="Tokuda H."/>
        </authorList>
    </citation>
    <scope>SUBUNIT</scope>
    <scope>INTERACTION WITH LPTB AND LPTF</scope>
</reference>
<name>LPTG_ECOLI</name>
<organism>
    <name type="scientific">Escherichia coli (strain K12)</name>
    <dbReference type="NCBI Taxonomy" id="83333"/>
    <lineage>
        <taxon>Bacteria</taxon>
        <taxon>Pseudomonadati</taxon>
        <taxon>Pseudomonadota</taxon>
        <taxon>Gammaproteobacteria</taxon>
        <taxon>Enterobacterales</taxon>
        <taxon>Enterobacteriaceae</taxon>
        <taxon>Escherichia</taxon>
    </lineage>
</organism>
<dbReference type="EMBL" id="U14003">
    <property type="protein sequence ID" value="AAA97159.1"/>
    <property type="status" value="ALT_INIT"/>
    <property type="molecule type" value="Genomic_DNA"/>
</dbReference>
<dbReference type="EMBL" id="U00096">
    <property type="protein sequence ID" value="AAC77219.2"/>
    <property type="molecule type" value="Genomic_DNA"/>
</dbReference>
<dbReference type="EMBL" id="AP009048">
    <property type="protein sequence ID" value="BAE78259.1"/>
    <property type="molecule type" value="Genomic_DNA"/>
</dbReference>
<dbReference type="RefSeq" id="NP_418683.4">
    <property type="nucleotide sequence ID" value="NC_000913.3"/>
</dbReference>
<dbReference type="RefSeq" id="WP_001295681.1">
    <property type="nucleotide sequence ID" value="NZ_STEB01000013.1"/>
</dbReference>
<dbReference type="PDB" id="6MHU">
    <property type="method" value="EM"/>
    <property type="resolution" value="4.00 A"/>
    <property type="chains" value="G=1-360"/>
</dbReference>
<dbReference type="PDB" id="6MHZ">
    <property type="method" value="EM"/>
    <property type="resolution" value="4.10 A"/>
    <property type="chains" value="G=1-360"/>
</dbReference>
<dbReference type="PDB" id="6MI7">
    <property type="method" value="EM"/>
    <property type="resolution" value="4.20 A"/>
    <property type="chains" value="G=1-360"/>
</dbReference>
<dbReference type="PDB" id="6MI8">
    <property type="method" value="EM"/>
    <property type="resolution" value="4.30 A"/>
    <property type="chains" value="G=1-360"/>
</dbReference>
<dbReference type="PDBsum" id="6MHU"/>
<dbReference type="PDBsum" id="6MHZ"/>
<dbReference type="PDBsum" id="6MI7"/>
<dbReference type="PDBsum" id="6MI8"/>
<dbReference type="EMDB" id="EMD-9118"/>
<dbReference type="EMDB" id="EMD-9124"/>
<dbReference type="EMDB" id="EMD-9125"/>
<dbReference type="EMDB" id="EMD-9126"/>
<dbReference type="SMR" id="P0ADC6"/>
<dbReference type="BioGRID" id="4262728">
    <property type="interactions" value="247"/>
</dbReference>
<dbReference type="ComplexPortal" id="CPX-3861">
    <property type="entry name" value="lptBFG LPS ABC transporter complex"/>
</dbReference>
<dbReference type="FunCoup" id="P0ADC6">
    <property type="interactions" value="374"/>
</dbReference>
<dbReference type="IntAct" id="P0ADC6">
    <property type="interactions" value="1"/>
</dbReference>
<dbReference type="MINT" id="P0ADC6"/>
<dbReference type="STRING" id="511145.b4262"/>
<dbReference type="TCDB" id="1.B.42.1.2">
    <property type="family name" value="the outer membrane lipopolysaccharide export porin (lps-ep) family"/>
</dbReference>
<dbReference type="jPOST" id="P0ADC6"/>
<dbReference type="PaxDb" id="511145-b4262"/>
<dbReference type="DNASU" id="945324"/>
<dbReference type="EnsemblBacteria" id="AAC77219">
    <property type="protein sequence ID" value="AAC77219"/>
    <property type="gene ID" value="b4262"/>
</dbReference>
<dbReference type="GeneID" id="75203517"/>
<dbReference type="GeneID" id="945324"/>
<dbReference type="KEGG" id="ecj:JW5760"/>
<dbReference type="KEGG" id="eco:b4262"/>
<dbReference type="KEGG" id="ecoc:C3026_22990"/>
<dbReference type="PATRIC" id="fig|1411691.4.peg.2441"/>
<dbReference type="EchoBASE" id="EB2425"/>
<dbReference type="eggNOG" id="COG0795">
    <property type="taxonomic scope" value="Bacteria"/>
</dbReference>
<dbReference type="HOGENOM" id="CLU_028799_1_1_6"/>
<dbReference type="InParanoid" id="P0ADC6"/>
<dbReference type="OMA" id="QDTQRYE"/>
<dbReference type="OrthoDB" id="9776227at2"/>
<dbReference type="PhylomeDB" id="P0ADC6"/>
<dbReference type="BioCyc" id="EcoCyc:G7889-MONOMER"/>
<dbReference type="BioCyc" id="MetaCyc:G7889-MONOMER"/>
<dbReference type="PRO" id="PR:P0ADC6"/>
<dbReference type="Proteomes" id="UP000000625">
    <property type="component" value="Chromosome"/>
</dbReference>
<dbReference type="GO" id="GO:0043190">
    <property type="term" value="C:ATP-binding cassette (ABC) transporter complex"/>
    <property type="evidence" value="ECO:0000314"/>
    <property type="project" value="EcoCyc"/>
</dbReference>
<dbReference type="GO" id="GO:0016020">
    <property type="term" value="C:membrane"/>
    <property type="evidence" value="ECO:0000314"/>
    <property type="project" value="EcoCyc"/>
</dbReference>
<dbReference type="GO" id="GO:0005886">
    <property type="term" value="C:plasma membrane"/>
    <property type="evidence" value="ECO:0000314"/>
    <property type="project" value="EcoCyc"/>
</dbReference>
<dbReference type="GO" id="GO:1990351">
    <property type="term" value="C:transporter complex"/>
    <property type="evidence" value="ECO:0000314"/>
    <property type="project" value="EcoCyc"/>
</dbReference>
<dbReference type="GO" id="GO:0043165">
    <property type="term" value="P:Gram-negative-bacterium-type cell outer membrane assembly"/>
    <property type="evidence" value="ECO:0000314"/>
    <property type="project" value="ComplexPortal"/>
</dbReference>
<dbReference type="GO" id="GO:0015920">
    <property type="term" value="P:lipopolysaccharide transport"/>
    <property type="evidence" value="ECO:0000314"/>
    <property type="project" value="ComplexPortal"/>
</dbReference>
<dbReference type="GO" id="GO:0055085">
    <property type="term" value="P:transmembrane transport"/>
    <property type="evidence" value="ECO:0007669"/>
    <property type="project" value="InterPro"/>
</dbReference>
<dbReference type="InterPro" id="IPR030923">
    <property type="entry name" value="LptG"/>
</dbReference>
<dbReference type="InterPro" id="IPR005495">
    <property type="entry name" value="LptG/LptF_permease"/>
</dbReference>
<dbReference type="NCBIfam" id="TIGR04408">
    <property type="entry name" value="LptG_lptG"/>
    <property type="match status" value="1"/>
</dbReference>
<dbReference type="PANTHER" id="PTHR33529:SF2">
    <property type="entry name" value="LIPOPOLYSACCHARIDE EXPORT SYSTEM PERMEASE PROTEIN LPTG"/>
    <property type="match status" value="1"/>
</dbReference>
<dbReference type="PANTHER" id="PTHR33529">
    <property type="entry name" value="SLR0882 PROTEIN-RELATED"/>
    <property type="match status" value="1"/>
</dbReference>
<dbReference type="Pfam" id="PF03739">
    <property type="entry name" value="LptF_LptG"/>
    <property type="match status" value="1"/>
</dbReference>
<evidence type="ECO:0000255" key="1"/>
<evidence type="ECO:0000269" key="2">
    <source>
    </source>
</evidence>
<evidence type="ECO:0000269" key="3">
    <source>
    </source>
</evidence>
<evidence type="ECO:0000305" key="4"/>
<keyword id="KW-0002">3D-structure</keyword>
<keyword id="KW-0997">Cell inner membrane</keyword>
<keyword id="KW-1003">Cell membrane</keyword>
<keyword id="KW-0472">Membrane</keyword>
<keyword id="KW-1185">Reference proteome</keyword>
<keyword id="KW-0812">Transmembrane</keyword>
<keyword id="KW-1133">Transmembrane helix</keyword>
<keyword id="KW-0813">Transport</keyword>
<comment type="function">
    <text evidence="2">Part of the ABC transporter complex LptBFG involved in the translocation of lipopolysaccharide (LPS) from the inner membrane to the outer membrane.</text>
</comment>
<comment type="subunit">
    <text evidence="3">Component of the lipopolysaccharide transport and assembly complex. The LptBFG transporter is composed of two ATP-binding proteins (LptB) and two transmembrane proteins (LptF and LptG).</text>
</comment>
<comment type="subcellular location">
    <subcellularLocation>
        <location>Cell inner membrane</location>
        <topology>Multi-pass membrane protein</topology>
    </subcellularLocation>
</comment>
<comment type="similarity">
    <text evidence="4">Belongs to the LptF/LptG family.</text>
</comment>
<comment type="sequence caution" evidence="4">
    <conflict type="erroneous initiation">
        <sequence resource="EMBL-CDS" id="AAA97159"/>
    </conflict>
    <text>Extended N-terminus.</text>
</comment>
<gene>
    <name type="primary">lptG</name>
    <name type="synonym">yjgQ</name>
    <name type="ordered locus">b4262</name>
    <name type="ordered locus">JW5760</name>
</gene>
<feature type="chain" id="PRO_0000169776" description="Lipopolysaccharide export system permease protein LptG">
    <location>
        <begin position="1"/>
        <end position="360"/>
    </location>
</feature>
<feature type="topological domain" description="Cytoplasmic" evidence="1">
    <location>
        <begin position="1"/>
        <end position="14"/>
    </location>
</feature>
<feature type="transmembrane region" description="Helical" evidence="1">
    <location>
        <begin position="15"/>
        <end position="35"/>
    </location>
</feature>
<feature type="topological domain" description="Periplasmic" evidence="1">
    <location>
        <begin position="36"/>
        <end position="63"/>
    </location>
</feature>
<feature type="transmembrane region" description="Helical" evidence="1">
    <location>
        <begin position="64"/>
        <end position="84"/>
    </location>
</feature>
<feature type="topological domain" description="Cytoplasmic" evidence="1">
    <location>
        <begin position="85"/>
        <end position="103"/>
    </location>
</feature>
<feature type="transmembrane region" description="Helical" evidence="1">
    <location>
        <begin position="104"/>
        <end position="124"/>
    </location>
</feature>
<feature type="topological domain" description="Periplasmic" evidence="1">
    <location>
        <begin position="125"/>
        <end position="278"/>
    </location>
</feature>
<feature type="transmembrane region" description="Helical" evidence="1">
    <location>
        <begin position="279"/>
        <end position="299"/>
    </location>
</feature>
<feature type="topological domain" description="Cytoplasmic" evidence="1">
    <location>
        <begin position="300"/>
        <end position="314"/>
    </location>
</feature>
<feature type="transmembrane region" description="Helical" evidence="1">
    <location>
        <begin position="315"/>
        <end position="335"/>
    </location>
</feature>
<feature type="topological domain" description="Periplasmic" evidence="1">
    <location>
        <position position="336"/>
    </location>
</feature>
<feature type="transmembrane region" description="Helical" evidence="1">
    <location>
        <begin position="337"/>
        <end position="357"/>
    </location>
</feature>
<feature type="topological domain" description="Cytoplasmic" evidence="1">
    <location>
        <begin position="358"/>
        <end position="360"/>
    </location>
</feature>
<accession>P0ADC6</accession>
<accession>P39341</accession>
<accession>Q2M647</accession>